<comment type="function">
    <text evidence="1">Catalyzes the oxidation of 3-carboxy-2-hydroxy-4-methylpentanoate (3-isopropylmalate) to 3-carboxy-4-methyl-2-oxopentanoate. The product decarboxylates to 4-methyl-2 oxopentanoate (By similarity).</text>
</comment>
<comment type="catalytic activity">
    <reaction>
        <text>(2R,3S)-3-isopropylmalate + NAD(+) = 4-methyl-2-oxopentanoate + CO2 + NADH</text>
        <dbReference type="Rhea" id="RHEA:32271"/>
        <dbReference type="ChEBI" id="CHEBI:16526"/>
        <dbReference type="ChEBI" id="CHEBI:17865"/>
        <dbReference type="ChEBI" id="CHEBI:35121"/>
        <dbReference type="ChEBI" id="CHEBI:57540"/>
        <dbReference type="ChEBI" id="CHEBI:57945"/>
        <dbReference type="EC" id="1.1.1.85"/>
    </reaction>
</comment>
<comment type="cofactor">
    <cofactor evidence="1">
        <name>Mg(2+)</name>
        <dbReference type="ChEBI" id="CHEBI:18420"/>
    </cofactor>
    <cofactor evidence="1">
        <name>Mn(2+)</name>
        <dbReference type="ChEBI" id="CHEBI:29035"/>
    </cofactor>
    <text evidence="1">Binds 1 Mg(2+) or Mn(2+) ion per subunit.</text>
</comment>
<comment type="pathway">
    <text>Amino-acid biosynthesis; L-leucine biosynthesis; L-leucine from 3-methyl-2-oxobutanoate: step 3/4.</text>
</comment>
<comment type="subunit">
    <text evidence="1">Homodimer.</text>
</comment>
<comment type="subcellular location">
    <subcellularLocation>
        <location evidence="1">Cytoplasm</location>
    </subcellularLocation>
</comment>
<comment type="similarity">
    <text evidence="2">Belongs to the isocitrate and isopropylmalate dehydrogenases family. LeuB type 1 subfamily.</text>
</comment>
<keyword id="KW-0028">Amino-acid biosynthesis</keyword>
<keyword id="KW-0100">Branched-chain amino acid biosynthesis</keyword>
<keyword id="KW-0963">Cytoplasm</keyword>
<keyword id="KW-0432">Leucine biosynthesis</keyword>
<keyword id="KW-0460">Magnesium</keyword>
<keyword id="KW-0464">Manganese</keyword>
<keyword id="KW-0479">Metal-binding</keyword>
<keyword id="KW-0520">NAD</keyword>
<keyword id="KW-0560">Oxidoreductase</keyword>
<gene>
    <name type="primary">leuB</name>
    <name type="ordered locus">TT_C0867</name>
</gene>
<protein>
    <recommendedName>
        <fullName>3-isopropylmalate dehydrogenase</fullName>
        <ecNumber>1.1.1.85</ecNumber>
    </recommendedName>
    <alternativeName>
        <fullName>3-IPM-DH</fullName>
    </alternativeName>
    <alternativeName>
        <fullName>Beta-IPM dehydrogenase</fullName>
        <shortName>IMDH</shortName>
    </alternativeName>
</protein>
<accession>P61494</accession>
<accession>P00351</accession>
<organism>
    <name type="scientific">Thermus thermophilus (strain ATCC BAA-163 / DSM 7039 / HB27)</name>
    <dbReference type="NCBI Taxonomy" id="262724"/>
    <lineage>
        <taxon>Bacteria</taxon>
        <taxon>Thermotogati</taxon>
        <taxon>Deinococcota</taxon>
        <taxon>Deinococci</taxon>
        <taxon>Thermales</taxon>
        <taxon>Thermaceae</taxon>
        <taxon>Thermus</taxon>
    </lineage>
</organism>
<name>LEU3_THET2</name>
<sequence length="345" mass="36750">MKVAVLPGDGIGPEVTEAALKVLRALDEAEGLGLAYEVFPFGGAAIDAFGEPFPEPTRKGVEEAEAVLLGSVGGPKWDGLPRKIRPETGLLSLRKSQDLFANLRPAKVFPGLERLSPLKEEIARGVDVLIVRELTGGIYFGEPRGMSEAEAWNTERYSKPEVERVARVAFEAARKRRKHVVSVDKANVLEVGEFWRKTVEEVGRGYPDVALEHQYVDAMAMHLVRSPARFDVVVTGNIFGDILSDLASVLPGSLGLLPSASLGRGTPVFEPVHGSAPDIAGKGLANPTAAILSAAMMLEHAFGLVELARKVEDAVAKALLEAPPPDLGGSAGTEAFTATVLRHLA</sequence>
<reference key="1">
    <citation type="submission" date="2002-05" db="EMBL/GenBank/DDBJ databases">
        <title>Characterization of homoisocitrate dehydrogenase from Thermus thermophilus HB27 and the evolutionary importance of beta-decarboxylating dehydrogenase.</title>
        <authorList>
            <person name="Miyazaki J."/>
            <person name="Kobashi N."/>
            <person name="Nishiyama M."/>
            <person name="Yamane H."/>
        </authorList>
    </citation>
    <scope>NUCLEOTIDE SEQUENCE [GENOMIC DNA]</scope>
</reference>
<reference key="2">
    <citation type="journal article" date="2004" name="Nat. Biotechnol.">
        <title>The genome sequence of the extreme thermophile Thermus thermophilus.</title>
        <authorList>
            <person name="Henne A."/>
            <person name="Brueggemann H."/>
            <person name="Raasch C."/>
            <person name="Wiezer A."/>
            <person name="Hartsch T."/>
            <person name="Liesegang H."/>
            <person name="Johann A."/>
            <person name="Lienard T."/>
            <person name="Gohl O."/>
            <person name="Martinez-Arias R."/>
            <person name="Jacobi C."/>
            <person name="Starkuviene V."/>
            <person name="Schlenczeck S."/>
            <person name="Dencker S."/>
            <person name="Huber R."/>
            <person name="Klenk H.-P."/>
            <person name="Kramer W."/>
            <person name="Merkl R."/>
            <person name="Gottschalk G."/>
            <person name="Fritz H.-J."/>
        </authorList>
    </citation>
    <scope>NUCLEOTIDE SEQUENCE [LARGE SCALE GENOMIC DNA]</scope>
    <source>
        <strain>ATCC BAA-163 / DSM 7039 / HB27</strain>
    </source>
</reference>
<dbReference type="EC" id="1.1.1.85"/>
<dbReference type="EMBL" id="AB085839">
    <property type="protein sequence ID" value="BAB96756.1"/>
    <property type="molecule type" value="Genomic_DNA"/>
</dbReference>
<dbReference type="EMBL" id="AE017221">
    <property type="protein sequence ID" value="AAS81211.1"/>
    <property type="molecule type" value="Genomic_DNA"/>
</dbReference>
<dbReference type="RefSeq" id="WP_011173296.1">
    <property type="nucleotide sequence ID" value="NC_005835.1"/>
</dbReference>
<dbReference type="SMR" id="P61494"/>
<dbReference type="KEGG" id="tth:TT_C0867"/>
<dbReference type="eggNOG" id="COG0473">
    <property type="taxonomic scope" value="Bacteria"/>
</dbReference>
<dbReference type="HOGENOM" id="CLU_031953_0_3_0"/>
<dbReference type="OrthoDB" id="9806254at2"/>
<dbReference type="BRENDA" id="1.1.1.85">
    <property type="organism ID" value="2305"/>
</dbReference>
<dbReference type="UniPathway" id="UPA00048">
    <property type="reaction ID" value="UER00072"/>
</dbReference>
<dbReference type="Proteomes" id="UP000000592">
    <property type="component" value="Chromosome"/>
</dbReference>
<dbReference type="GO" id="GO:0005829">
    <property type="term" value="C:cytosol"/>
    <property type="evidence" value="ECO:0007669"/>
    <property type="project" value="TreeGrafter"/>
</dbReference>
<dbReference type="GO" id="GO:0003862">
    <property type="term" value="F:3-isopropylmalate dehydrogenase activity"/>
    <property type="evidence" value="ECO:0007669"/>
    <property type="project" value="UniProtKB-UniRule"/>
</dbReference>
<dbReference type="GO" id="GO:0000287">
    <property type="term" value="F:magnesium ion binding"/>
    <property type="evidence" value="ECO:0007669"/>
    <property type="project" value="InterPro"/>
</dbReference>
<dbReference type="GO" id="GO:0051287">
    <property type="term" value="F:NAD binding"/>
    <property type="evidence" value="ECO:0007669"/>
    <property type="project" value="InterPro"/>
</dbReference>
<dbReference type="GO" id="GO:0009098">
    <property type="term" value="P:L-leucine biosynthetic process"/>
    <property type="evidence" value="ECO:0007669"/>
    <property type="project" value="UniProtKB-UniRule"/>
</dbReference>
<dbReference type="FunFam" id="3.40.718.10:FF:000006">
    <property type="entry name" value="3-isopropylmalate dehydrogenase"/>
    <property type="match status" value="1"/>
</dbReference>
<dbReference type="Gene3D" id="3.40.718.10">
    <property type="entry name" value="Isopropylmalate Dehydrogenase"/>
    <property type="match status" value="1"/>
</dbReference>
<dbReference type="HAMAP" id="MF_01033">
    <property type="entry name" value="LeuB_type1"/>
    <property type="match status" value="1"/>
</dbReference>
<dbReference type="InterPro" id="IPR019818">
    <property type="entry name" value="IsoCit/isopropylmalate_DH_CS"/>
</dbReference>
<dbReference type="InterPro" id="IPR024084">
    <property type="entry name" value="IsoPropMal-DH-like_dom"/>
</dbReference>
<dbReference type="InterPro" id="IPR004429">
    <property type="entry name" value="Isopropylmalate_DH"/>
</dbReference>
<dbReference type="NCBIfam" id="TIGR00169">
    <property type="entry name" value="leuB"/>
    <property type="match status" value="1"/>
</dbReference>
<dbReference type="PANTHER" id="PTHR42979">
    <property type="entry name" value="3-ISOPROPYLMALATE DEHYDROGENASE"/>
    <property type="match status" value="1"/>
</dbReference>
<dbReference type="PANTHER" id="PTHR42979:SF1">
    <property type="entry name" value="3-ISOPROPYLMALATE DEHYDROGENASE"/>
    <property type="match status" value="1"/>
</dbReference>
<dbReference type="Pfam" id="PF00180">
    <property type="entry name" value="Iso_dh"/>
    <property type="match status" value="1"/>
</dbReference>
<dbReference type="SMART" id="SM01329">
    <property type="entry name" value="Iso_dh"/>
    <property type="match status" value="1"/>
</dbReference>
<dbReference type="SUPFAM" id="SSF53659">
    <property type="entry name" value="Isocitrate/Isopropylmalate dehydrogenase-like"/>
    <property type="match status" value="1"/>
</dbReference>
<dbReference type="PROSITE" id="PS00470">
    <property type="entry name" value="IDH_IMDH"/>
    <property type="match status" value="1"/>
</dbReference>
<proteinExistence type="inferred from homology"/>
<evidence type="ECO:0000250" key="1"/>
<evidence type="ECO:0000305" key="2"/>
<feature type="chain" id="PRO_0000083774" description="3-isopropylmalate dehydrogenase">
    <location>
        <begin position="1"/>
        <end position="345"/>
    </location>
</feature>
<feature type="binding site" evidence="1">
    <location>
        <begin position="74"/>
        <end position="87"/>
    </location>
    <ligand>
        <name>NAD(+)</name>
        <dbReference type="ChEBI" id="CHEBI:57540"/>
    </ligand>
</feature>
<feature type="binding site" evidence="1">
    <location>
        <position position="94"/>
    </location>
    <ligand>
        <name>substrate</name>
    </ligand>
</feature>
<feature type="binding site" evidence="1">
    <location>
        <position position="104"/>
    </location>
    <ligand>
        <name>substrate</name>
    </ligand>
</feature>
<feature type="binding site" evidence="1">
    <location>
        <position position="132"/>
    </location>
    <ligand>
        <name>substrate</name>
    </ligand>
</feature>
<feature type="binding site" evidence="1">
    <location>
        <position position="217"/>
    </location>
    <ligand>
        <name>Mg(2+)</name>
        <dbReference type="ChEBI" id="CHEBI:18420"/>
    </ligand>
</feature>
<feature type="binding site" evidence="1">
    <location>
        <position position="217"/>
    </location>
    <ligand>
        <name>substrate</name>
    </ligand>
</feature>
<feature type="binding site" evidence="1">
    <location>
        <position position="241"/>
    </location>
    <ligand>
        <name>Mg(2+)</name>
        <dbReference type="ChEBI" id="CHEBI:18420"/>
    </ligand>
</feature>
<feature type="binding site" evidence="1">
    <location>
        <position position="245"/>
    </location>
    <ligand>
        <name>Mg(2+)</name>
        <dbReference type="ChEBI" id="CHEBI:18420"/>
    </ligand>
</feature>
<feature type="binding site" evidence="1">
    <location>
        <begin position="274"/>
        <end position="286"/>
    </location>
    <ligand>
        <name>NAD(+)</name>
        <dbReference type="ChEBI" id="CHEBI:57540"/>
    </ligand>
</feature>
<feature type="site" description="Important for catalysis" evidence="1">
    <location>
        <position position="139"/>
    </location>
</feature>
<feature type="site" description="Important for catalysis" evidence="1">
    <location>
        <position position="185"/>
    </location>
</feature>